<protein>
    <recommendedName>
        <fullName evidence="1">Guanylate kinase</fullName>
        <ecNumber evidence="1">2.7.4.8</ecNumber>
    </recommendedName>
    <alternativeName>
        <fullName evidence="1">GMP kinase</fullName>
    </alternativeName>
</protein>
<name>KGUA_RHIEC</name>
<dbReference type="EC" id="2.7.4.8" evidence="1"/>
<dbReference type="EMBL" id="CP000133">
    <property type="protein sequence ID" value="ABC90251.1"/>
    <property type="molecule type" value="Genomic_DNA"/>
</dbReference>
<dbReference type="RefSeq" id="WP_011424781.1">
    <property type="nucleotide sequence ID" value="NC_007761.1"/>
</dbReference>
<dbReference type="SMR" id="Q2KA85"/>
<dbReference type="KEGG" id="ret:RHE_CH01448"/>
<dbReference type="eggNOG" id="COG0194">
    <property type="taxonomic scope" value="Bacteria"/>
</dbReference>
<dbReference type="HOGENOM" id="CLU_001715_1_0_5"/>
<dbReference type="OrthoDB" id="9808150at2"/>
<dbReference type="Proteomes" id="UP000001936">
    <property type="component" value="Chromosome"/>
</dbReference>
<dbReference type="GO" id="GO:0005829">
    <property type="term" value="C:cytosol"/>
    <property type="evidence" value="ECO:0007669"/>
    <property type="project" value="TreeGrafter"/>
</dbReference>
<dbReference type="GO" id="GO:0005524">
    <property type="term" value="F:ATP binding"/>
    <property type="evidence" value="ECO:0007669"/>
    <property type="project" value="UniProtKB-UniRule"/>
</dbReference>
<dbReference type="GO" id="GO:0004385">
    <property type="term" value="F:guanylate kinase activity"/>
    <property type="evidence" value="ECO:0007669"/>
    <property type="project" value="UniProtKB-UniRule"/>
</dbReference>
<dbReference type="CDD" id="cd00071">
    <property type="entry name" value="GMPK"/>
    <property type="match status" value="1"/>
</dbReference>
<dbReference type="FunFam" id="3.30.63.10:FF:000002">
    <property type="entry name" value="Guanylate kinase 1"/>
    <property type="match status" value="1"/>
</dbReference>
<dbReference type="Gene3D" id="3.30.63.10">
    <property type="entry name" value="Guanylate Kinase phosphate binding domain"/>
    <property type="match status" value="1"/>
</dbReference>
<dbReference type="Gene3D" id="3.40.50.300">
    <property type="entry name" value="P-loop containing nucleotide triphosphate hydrolases"/>
    <property type="match status" value="1"/>
</dbReference>
<dbReference type="HAMAP" id="MF_00328">
    <property type="entry name" value="Guanylate_kinase"/>
    <property type="match status" value="1"/>
</dbReference>
<dbReference type="InterPro" id="IPR008145">
    <property type="entry name" value="GK/Ca_channel_bsu"/>
</dbReference>
<dbReference type="InterPro" id="IPR008144">
    <property type="entry name" value="Guanylate_kin-like_dom"/>
</dbReference>
<dbReference type="InterPro" id="IPR017665">
    <property type="entry name" value="Guanylate_kinase"/>
</dbReference>
<dbReference type="InterPro" id="IPR020590">
    <property type="entry name" value="Guanylate_kinase_CS"/>
</dbReference>
<dbReference type="InterPro" id="IPR027417">
    <property type="entry name" value="P-loop_NTPase"/>
</dbReference>
<dbReference type="NCBIfam" id="TIGR03263">
    <property type="entry name" value="guanyl_kin"/>
    <property type="match status" value="1"/>
</dbReference>
<dbReference type="PANTHER" id="PTHR23117:SF13">
    <property type="entry name" value="GUANYLATE KINASE"/>
    <property type="match status" value="1"/>
</dbReference>
<dbReference type="PANTHER" id="PTHR23117">
    <property type="entry name" value="GUANYLATE KINASE-RELATED"/>
    <property type="match status" value="1"/>
</dbReference>
<dbReference type="Pfam" id="PF00625">
    <property type="entry name" value="Guanylate_kin"/>
    <property type="match status" value="1"/>
</dbReference>
<dbReference type="SMART" id="SM00072">
    <property type="entry name" value="GuKc"/>
    <property type="match status" value="1"/>
</dbReference>
<dbReference type="SUPFAM" id="SSF52540">
    <property type="entry name" value="P-loop containing nucleoside triphosphate hydrolases"/>
    <property type="match status" value="1"/>
</dbReference>
<dbReference type="PROSITE" id="PS00856">
    <property type="entry name" value="GUANYLATE_KINASE_1"/>
    <property type="match status" value="1"/>
</dbReference>
<dbReference type="PROSITE" id="PS50052">
    <property type="entry name" value="GUANYLATE_KINASE_2"/>
    <property type="match status" value="1"/>
</dbReference>
<accession>Q2KA85</accession>
<gene>
    <name evidence="1" type="primary">gmk</name>
    <name type="ordered locus">RHE_CH01448</name>
</gene>
<proteinExistence type="inferred from homology"/>
<sequence>MKPAKSSPVQIARRGLMLVISSPSGAGKSTIARTLLETDKHIGLSVSVTTRPRRPSEVEGVHYHFKSVREFERLRDSDALLEWAEVHGNFYGTPREPVEQAMAEGRDMLFDIDWQGAQQLQEKMSADVVSIFVLPPTMTELQSRLHRRAEDSEEVIQTRLANSRAEIAHWREYDYVIVNDDLNTAFDAVQSIVKAERLRRDRRHGMFDFVRELLEETPSL</sequence>
<organism>
    <name type="scientific">Rhizobium etli (strain ATCC 51251 / DSM 11541 / JCM 21823 / NBRC 15573 / CFN 42)</name>
    <dbReference type="NCBI Taxonomy" id="347834"/>
    <lineage>
        <taxon>Bacteria</taxon>
        <taxon>Pseudomonadati</taxon>
        <taxon>Pseudomonadota</taxon>
        <taxon>Alphaproteobacteria</taxon>
        <taxon>Hyphomicrobiales</taxon>
        <taxon>Rhizobiaceae</taxon>
        <taxon>Rhizobium/Agrobacterium group</taxon>
        <taxon>Rhizobium</taxon>
    </lineage>
</organism>
<feature type="chain" id="PRO_0000266379" description="Guanylate kinase">
    <location>
        <begin position="1"/>
        <end position="220"/>
    </location>
</feature>
<feature type="domain" description="Guanylate kinase-like" evidence="1">
    <location>
        <begin position="15"/>
        <end position="194"/>
    </location>
</feature>
<feature type="binding site" evidence="1">
    <location>
        <begin position="22"/>
        <end position="29"/>
    </location>
    <ligand>
        <name>ATP</name>
        <dbReference type="ChEBI" id="CHEBI:30616"/>
    </ligand>
</feature>
<evidence type="ECO:0000255" key="1">
    <source>
        <dbReference type="HAMAP-Rule" id="MF_00328"/>
    </source>
</evidence>
<reference key="1">
    <citation type="journal article" date="2006" name="Proc. Natl. Acad. Sci. U.S.A.">
        <title>The partitioned Rhizobium etli genome: genetic and metabolic redundancy in seven interacting replicons.</title>
        <authorList>
            <person name="Gonzalez V."/>
            <person name="Santamaria R.I."/>
            <person name="Bustos P."/>
            <person name="Hernandez-Gonzalez I."/>
            <person name="Medrano-Soto A."/>
            <person name="Moreno-Hagelsieb G."/>
            <person name="Janga S.C."/>
            <person name="Ramirez M.A."/>
            <person name="Jimenez-Jacinto V."/>
            <person name="Collado-Vides J."/>
            <person name="Davila G."/>
        </authorList>
    </citation>
    <scope>NUCLEOTIDE SEQUENCE [LARGE SCALE GENOMIC DNA]</scope>
    <source>
        <strain>ATCC 51251 / DSM 11541 / JCM 21823 / NBRC 15573 / CFN 42</strain>
    </source>
</reference>
<keyword id="KW-0067">ATP-binding</keyword>
<keyword id="KW-0963">Cytoplasm</keyword>
<keyword id="KW-0418">Kinase</keyword>
<keyword id="KW-0547">Nucleotide-binding</keyword>
<keyword id="KW-1185">Reference proteome</keyword>
<keyword id="KW-0808">Transferase</keyword>
<comment type="function">
    <text evidence="1">Essential for recycling GMP and indirectly, cGMP.</text>
</comment>
<comment type="catalytic activity">
    <reaction evidence="1">
        <text>GMP + ATP = GDP + ADP</text>
        <dbReference type="Rhea" id="RHEA:20780"/>
        <dbReference type="ChEBI" id="CHEBI:30616"/>
        <dbReference type="ChEBI" id="CHEBI:58115"/>
        <dbReference type="ChEBI" id="CHEBI:58189"/>
        <dbReference type="ChEBI" id="CHEBI:456216"/>
        <dbReference type="EC" id="2.7.4.8"/>
    </reaction>
</comment>
<comment type="subcellular location">
    <subcellularLocation>
        <location evidence="1">Cytoplasm</location>
    </subcellularLocation>
</comment>
<comment type="similarity">
    <text evidence="1">Belongs to the guanylate kinase family.</text>
</comment>